<sequence length="103" mass="10878">MAAVTLSVSTVKPLGERVFVKVSESEEKTAGGILLPDSAKEKPQVGEVVSAGPGKRNDDGTRAEMEVKVGDKVLYSKYAGTDIKLGGDEYVLLAEKDILAIVN</sequence>
<evidence type="ECO:0000255" key="1">
    <source>
        <dbReference type="HAMAP-Rule" id="MF_00580"/>
    </source>
</evidence>
<feature type="chain" id="PRO_1000025397" description="Co-chaperonin GroES">
    <location>
        <begin position="1"/>
        <end position="103"/>
    </location>
</feature>
<organism>
    <name type="scientific">Trichodesmium erythraeum (strain IMS101)</name>
    <dbReference type="NCBI Taxonomy" id="203124"/>
    <lineage>
        <taxon>Bacteria</taxon>
        <taxon>Bacillati</taxon>
        <taxon>Cyanobacteriota</taxon>
        <taxon>Cyanophyceae</taxon>
        <taxon>Oscillatoriophycideae</taxon>
        <taxon>Oscillatoriales</taxon>
        <taxon>Microcoleaceae</taxon>
        <taxon>Trichodesmium</taxon>
    </lineage>
</organism>
<name>CH10_TRIEI</name>
<accession>Q10WQ5</accession>
<reference key="1">
    <citation type="journal article" date="2015" name="Proc. Natl. Acad. Sci. U.S.A.">
        <title>Trichodesmium genome maintains abundant, widespread noncoding DNA in situ, despite oligotrophic lifestyle.</title>
        <authorList>
            <person name="Walworth N."/>
            <person name="Pfreundt U."/>
            <person name="Nelson W.C."/>
            <person name="Mincer T."/>
            <person name="Heidelberg J.F."/>
            <person name="Fu F."/>
            <person name="Waterbury J.B."/>
            <person name="Glavina del Rio T."/>
            <person name="Goodwin L."/>
            <person name="Kyrpides N.C."/>
            <person name="Land M.L."/>
            <person name="Woyke T."/>
            <person name="Hutchins D.A."/>
            <person name="Hess W.R."/>
            <person name="Webb E.A."/>
        </authorList>
    </citation>
    <scope>NUCLEOTIDE SEQUENCE [LARGE SCALE GENOMIC DNA]</scope>
    <source>
        <strain>IMS101</strain>
    </source>
</reference>
<keyword id="KW-0143">Chaperone</keyword>
<keyword id="KW-0963">Cytoplasm</keyword>
<gene>
    <name evidence="1" type="primary">groES</name>
    <name evidence="1" type="synonym">groS</name>
    <name type="ordered locus">Tery_4326</name>
</gene>
<proteinExistence type="inferred from homology"/>
<dbReference type="EMBL" id="CP000393">
    <property type="protein sequence ID" value="ABG53319.1"/>
    <property type="molecule type" value="Genomic_DNA"/>
</dbReference>
<dbReference type="RefSeq" id="WP_011613645.1">
    <property type="nucleotide sequence ID" value="NC_008312.1"/>
</dbReference>
<dbReference type="SMR" id="Q10WQ5"/>
<dbReference type="STRING" id="203124.Tery_4326"/>
<dbReference type="KEGG" id="ter:Tery_4326"/>
<dbReference type="eggNOG" id="COG0234">
    <property type="taxonomic scope" value="Bacteria"/>
</dbReference>
<dbReference type="HOGENOM" id="CLU_132825_2_1_3"/>
<dbReference type="OrthoDB" id="9806791at2"/>
<dbReference type="GO" id="GO:0005737">
    <property type="term" value="C:cytoplasm"/>
    <property type="evidence" value="ECO:0007669"/>
    <property type="project" value="UniProtKB-SubCell"/>
</dbReference>
<dbReference type="GO" id="GO:0005524">
    <property type="term" value="F:ATP binding"/>
    <property type="evidence" value="ECO:0007669"/>
    <property type="project" value="InterPro"/>
</dbReference>
<dbReference type="GO" id="GO:0046872">
    <property type="term" value="F:metal ion binding"/>
    <property type="evidence" value="ECO:0007669"/>
    <property type="project" value="TreeGrafter"/>
</dbReference>
<dbReference type="GO" id="GO:0044183">
    <property type="term" value="F:protein folding chaperone"/>
    <property type="evidence" value="ECO:0007669"/>
    <property type="project" value="InterPro"/>
</dbReference>
<dbReference type="GO" id="GO:0051087">
    <property type="term" value="F:protein-folding chaperone binding"/>
    <property type="evidence" value="ECO:0007669"/>
    <property type="project" value="TreeGrafter"/>
</dbReference>
<dbReference type="GO" id="GO:0051082">
    <property type="term" value="F:unfolded protein binding"/>
    <property type="evidence" value="ECO:0007669"/>
    <property type="project" value="TreeGrafter"/>
</dbReference>
<dbReference type="GO" id="GO:0051085">
    <property type="term" value="P:chaperone cofactor-dependent protein refolding"/>
    <property type="evidence" value="ECO:0007669"/>
    <property type="project" value="TreeGrafter"/>
</dbReference>
<dbReference type="CDD" id="cd00320">
    <property type="entry name" value="cpn10"/>
    <property type="match status" value="1"/>
</dbReference>
<dbReference type="FunFam" id="2.30.33.40:FF:000001">
    <property type="entry name" value="10 kDa chaperonin"/>
    <property type="match status" value="1"/>
</dbReference>
<dbReference type="Gene3D" id="2.30.33.40">
    <property type="entry name" value="GroES chaperonin"/>
    <property type="match status" value="1"/>
</dbReference>
<dbReference type="HAMAP" id="MF_00580">
    <property type="entry name" value="CH10"/>
    <property type="match status" value="1"/>
</dbReference>
<dbReference type="InterPro" id="IPR020818">
    <property type="entry name" value="Chaperonin_GroES"/>
</dbReference>
<dbReference type="InterPro" id="IPR037124">
    <property type="entry name" value="Chaperonin_GroES_sf"/>
</dbReference>
<dbReference type="InterPro" id="IPR018369">
    <property type="entry name" value="Chaprnonin_Cpn10_CS"/>
</dbReference>
<dbReference type="InterPro" id="IPR011032">
    <property type="entry name" value="GroES-like_sf"/>
</dbReference>
<dbReference type="NCBIfam" id="NF001527">
    <property type="entry name" value="PRK00364.1-2"/>
    <property type="match status" value="1"/>
</dbReference>
<dbReference type="NCBIfam" id="NF001530">
    <property type="entry name" value="PRK00364.1-6"/>
    <property type="match status" value="1"/>
</dbReference>
<dbReference type="NCBIfam" id="NF001531">
    <property type="entry name" value="PRK00364.2-2"/>
    <property type="match status" value="1"/>
</dbReference>
<dbReference type="NCBIfam" id="NF001533">
    <property type="entry name" value="PRK00364.2-4"/>
    <property type="match status" value="1"/>
</dbReference>
<dbReference type="NCBIfam" id="NF001534">
    <property type="entry name" value="PRK00364.2-5"/>
    <property type="match status" value="1"/>
</dbReference>
<dbReference type="PANTHER" id="PTHR10772">
    <property type="entry name" value="10 KDA HEAT SHOCK PROTEIN"/>
    <property type="match status" value="1"/>
</dbReference>
<dbReference type="PANTHER" id="PTHR10772:SF58">
    <property type="entry name" value="CO-CHAPERONIN GROES"/>
    <property type="match status" value="1"/>
</dbReference>
<dbReference type="Pfam" id="PF00166">
    <property type="entry name" value="Cpn10"/>
    <property type="match status" value="1"/>
</dbReference>
<dbReference type="PRINTS" id="PR00297">
    <property type="entry name" value="CHAPERONIN10"/>
</dbReference>
<dbReference type="SMART" id="SM00883">
    <property type="entry name" value="Cpn10"/>
    <property type="match status" value="1"/>
</dbReference>
<dbReference type="SUPFAM" id="SSF50129">
    <property type="entry name" value="GroES-like"/>
    <property type="match status" value="1"/>
</dbReference>
<dbReference type="PROSITE" id="PS00681">
    <property type="entry name" value="CHAPERONINS_CPN10"/>
    <property type="match status" value="1"/>
</dbReference>
<protein>
    <recommendedName>
        <fullName evidence="1">Co-chaperonin GroES</fullName>
    </recommendedName>
    <alternativeName>
        <fullName evidence="1">10 kDa chaperonin</fullName>
    </alternativeName>
    <alternativeName>
        <fullName evidence="1">Chaperonin-10</fullName>
        <shortName evidence="1">Cpn10</shortName>
    </alternativeName>
</protein>
<comment type="function">
    <text evidence="1">Together with the chaperonin GroEL, plays an essential role in assisting protein folding. The GroEL-GroES system forms a nano-cage that allows encapsulation of the non-native substrate proteins and provides a physical environment optimized to promote and accelerate protein folding. GroES binds to the apical surface of the GroEL ring, thereby capping the opening of the GroEL channel.</text>
</comment>
<comment type="subunit">
    <text evidence="1">Heptamer of 7 subunits arranged in a ring. Interacts with the chaperonin GroEL.</text>
</comment>
<comment type="subcellular location">
    <subcellularLocation>
        <location evidence="1">Cytoplasm</location>
    </subcellularLocation>
</comment>
<comment type="similarity">
    <text evidence="1">Belongs to the GroES chaperonin family.</text>
</comment>